<reference key="1">
    <citation type="journal article" date="2002" name="J. Bacteriol.">
        <title>Whole-genome comparison of Mycobacterium tuberculosis clinical and laboratory strains.</title>
        <authorList>
            <person name="Fleischmann R.D."/>
            <person name="Alland D."/>
            <person name="Eisen J.A."/>
            <person name="Carpenter L."/>
            <person name="White O."/>
            <person name="Peterson J.D."/>
            <person name="DeBoy R.T."/>
            <person name="Dodson R.J."/>
            <person name="Gwinn M.L."/>
            <person name="Haft D.H."/>
            <person name="Hickey E.K."/>
            <person name="Kolonay J.F."/>
            <person name="Nelson W.C."/>
            <person name="Umayam L.A."/>
            <person name="Ermolaeva M.D."/>
            <person name="Salzberg S.L."/>
            <person name="Delcher A."/>
            <person name="Utterback T.R."/>
            <person name="Weidman J.F."/>
            <person name="Khouri H.M."/>
            <person name="Gill J."/>
            <person name="Mikula A."/>
            <person name="Bishai W."/>
            <person name="Jacobs W.R. Jr."/>
            <person name="Venter J.C."/>
            <person name="Fraser C.M."/>
        </authorList>
    </citation>
    <scope>NUCLEOTIDE SEQUENCE [LARGE SCALE GENOMIC DNA]</scope>
    <source>
        <strain>CDC 1551 / Oshkosh</strain>
    </source>
</reference>
<proteinExistence type="inferred from homology"/>
<gene>
    <name type="primary">secG</name>
    <name type="ordered locus">MT1485</name>
</gene>
<evidence type="ECO:0000250" key="1"/>
<evidence type="ECO:0000255" key="2"/>
<evidence type="ECO:0000305" key="3"/>
<comment type="function">
    <text evidence="1">Involved in protein export. Participates in an early event of protein translocation (By similarity).</text>
</comment>
<comment type="subcellular location">
    <subcellularLocation>
        <location evidence="3">Cell membrane</location>
        <topology evidence="3">Multi-pass membrane protein</topology>
    </subcellularLocation>
</comment>
<comment type="similarity">
    <text evidence="3">Belongs to the SecG family.</text>
</comment>
<name>SECG_MYCTO</name>
<keyword id="KW-1003">Cell membrane</keyword>
<keyword id="KW-0472">Membrane</keyword>
<keyword id="KW-0653">Protein transport</keyword>
<keyword id="KW-1185">Reference proteome</keyword>
<keyword id="KW-0811">Translocation</keyword>
<keyword id="KW-0812">Transmembrane</keyword>
<keyword id="KW-1133">Transmembrane helix</keyword>
<keyword id="KW-0813">Transport</keyword>
<dbReference type="EMBL" id="AE000516">
    <property type="protein sequence ID" value="AAK45749.1"/>
    <property type="molecule type" value="Genomic_DNA"/>
</dbReference>
<dbReference type="PIR" id="C70916">
    <property type="entry name" value="C70916"/>
</dbReference>
<dbReference type="RefSeq" id="WP_003407407.1">
    <property type="nucleotide sequence ID" value="NZ_KK341227.1"/>
</dbReference>
<dbReference type="GeneID" id="45425418"/>
<dbReference type="KEGG" id="mtc:MT1485"/>
<dbReference type="PATRIC" id="fig|83331.31.peg.1595"/>
<dbReference type="HOGENOM" id="CLU_094156_7_1_11"/>
<dbReference type="Proteomes" id="UP000001020">
    <property type="component" value="Chromosome"/>
</dbReference>
<dbReference type="GO" id="GO:0005886">
    <property type="term" value="C:plasma membrane"/>
    <property type="evidence" value="ECO:0007669"/>
    <property type="project" value="UniProtKB-SubCell"/>
</dbReference>
<dbReference type="GO" id="GO:0015450">
    <property type="term" value="F:protein-transporting ATPase activity"/>
    <property type="evidence" value="ECO:0007669"/>
    <property type="project" value="InterPro"/>
</dbReference>
<dbReference type="GO" id="GO:0009306">
    <property type="term" value="P:protein secretion"/>
    <property type="evidence" value="ECO:0007669"/>
    <property type="project" value="InterPro"/>
</dbReference>
<dbReference type="InterPro" id="IPR004692">
    <property type="entry name" value="SecG"/>
</dbReference>
<dbReference type="NCBIfam" id="TIGR00810">
    <property type="entry name" value="secG"/>
    <property type="match status" value="1"/>
</dbReference>
<dbReference type="Pfam" id="PF03840">
    <property type="entry name" value="SecG"/>
    <property type="match status" value="1"/>
</dbReference>
<feature type="chain" id="PRO_0000428331" description="Probable protein-export membrane protein SecG">
    <location>
        <begin position="1"/>
        <end position="77"/>
    </location>
</feature>
<feature type="transmembrane region" description="Helical" evidence="2">
    <location>
        <begin position="3"/>
        <end position="23"/>
    </location>
</feature>
<feature type="transmembrane region" description="Helical" evidence="2">
    <location>
        <begin position="55"/>
        <end position="75"/>
    </location>
</feature>
<organism>
    <name type="scientific">Mycobacterium tuberculosis (strain CDC 1551 / Oshkosh)</name>
    <dbReference type="NCBI Taxonomy" id="83331"/>
    <lineage>
        <taxon>Bacteria</taxon>
        <taxon>Bacillati</taxon>
        <taxon>Actinomycetota</taxon>
        <taxon>Actinomycetes</taxon>
        <taxon>Mycobacteriales</taxon>
        <taxon>Mycobacteriaceae</taxon>
        <taxon>Mycobacterium</taxon>
        <taxon>Mycobacterium tuberculosis complex</taxon>
    </lineage>
</organism>
<protein>
    <recommendedName>
        <fullName>Probable protein-export membrane protein SecG</fullName>
    </recommendedName>
</protein>
<sequence length="77" mass="8163">MELALQITLIVTSVLVVLLVLLHRAKGGGLSTLFGGGVQSSLSGSTVVEKNLDRLTLFVTGIWLVSIIGVALLIKYR</sequence>
<accession>P9WGN4</accession>
<accession>L0T9E7</accession>
<accession>O06819</accession>
<accession>P66791</accession>